<name>FER_CAPAA</name>
<proteinExistence type="evidence at protein level"/>
<organism evidence="3">
    <name type="scientific">Capsicum annuum var. annuum</name>
    <name type="common">Red pepper</name>
    <dbReference type="NCBI Taxonomy" id="40321"/>
    <lineage>
        <taxon>Eukaryota</taxon>
        <taxon>Viridiplantae</taxon>
        <taxon>Streptophyta</taxon>
        <taxon>Embryophyta</taxon>
        <taxon>Tracheophyta</taxon>
        <taxon>Spermatophyta</taxon>
        <taxon>Magnoliopsida</taxon>
        <taxon>eudicotyledons</taxon>
        <taxon>Gunneridae</taxon>
        <taxon>Pentapetalae</taxon>
        <taxon>asterids</taxon>
        <taxon>lamiids</taxon>
        <taxon>Solanales</taxon>
        <taxon>Solanaceae</taxon>
        <taxon>Solanoideae</taxon>
        <taxon>Capsiceae</taxon>
        <taxon>Capsicum</taxon>
    </lineage>
</organism>
<accession>P83527</accession>
<evidence type="ECO:0000255" key="1">
    <source>
        <dbReference type="PROSITE-ProRule" id="PRU00465"/>
    </source>
</evidence>
<evidence type="ECO:0000269" key="2">
    <source ref="1"/>
</evidence>
<evidence type="ECO:0000305" key="3"/>
<feature type="chain" id="PRO_0000189312" description="Ferredoxin">
    <location>
        <begin position="1"/>
        <end position="97"/>
    </location>
</feature>
<feature type="domain" description="2Fe-2S ferredoxin-type" evidence="1">
    <location>
        <begin position="3"/>
        <end position="93"/>
    </location>
</feature>
<feature type="binding site" evidence="1">
    <location>
        <position position="39"/>
    </location>
    <ligand>
        <name>[2Fe-2S] cluster</name>
        <dbReference type="ChEBI" id="CHEBI:190135"/>
    </ligand>
</feature>
<feature type="binding site" evidence="1">
    <location>
        <position position="44"/>
    </location>
    <ligand>
        <name>[2Fe-2S] cluster</name>
        <dbReference type="ChEBI" id="CHEBI:190135"/>
    </ligand>
</feature>
<feature type="binding site" evidence="1">
    <location>
        <position position="47"/>
    </location>
    <ligand>
        <name>[2Fe-2S] cluster</name>
        <dbReference type="ChEBI" id="CHEBI:190135"/>
    </ligand>
</feature>
<feature type="binding site" evidence="1">
    <location>
        <position position="77"/>
    </location>
    <ligand>
        <name>[2Fe-2S] cluster</name>
        <dbReference type="ChEBI" id="CHEBI:190135"/>
    </ligand>
</feature>
<protein>
    <recommendedName>
        <fullName>Ferredoxin</fullName>
    </recommendedName>
</protein>
<keyword id="KW-0001">2Fe-2S</keyword>
<keyword id="KW-0150">Chloroplast</keyword>
<keyword id="KW-0903">Direct protein sequencing</keyword>
<keyword id="KW-0249">Electron transport</keyword>
<keyword id="KW-0408">Iron</keyword>
<keyword id="KW-0411">Iron-sulfur</keyword>
<keyword id="KW-0479">Metal-binding</keyword>
<keyword id="KW-0934">Plastid</keyword>
<keyword id="KW-0813">Transport</keyword>
<reference evidence="3" key="1">
    <citation type="journal article" date="1999" name="Nat. Medicines">
        <title>Protein Chemotaxonomy of the solanaceae. VII. Amino acid sequence of ferredoxin from Capsicum annuum.</title>
        <authorList>
            <person name="Mino Y."/>
            <person name="Iwao M."/>
        </authorList>
    </citation>
    <scope>PROTEIN SEQUENCE</scope>
    <scope>FUNCTION</scope>
    <scope>COFACTOR</scope>
    <scope>SUBCELLULAR LOCATION</scope>
    <source>
        <tissue>Leaf</tissue>
    </source>
</reference>
<sequence>ASYKVKLITPDGPIEFDCPDDVYILDQAEEAGHDLPYSCRAGSCSSCAGKIAGGAVDQTDGNFLDDDQLEEGWVLTCVAYPQSDVTIETHKEAELVG</sequence>
<comment type="function">
    <text evidence="2 3">Ferredoxins are iron-sulfur proteins that transfer electrons in a wide variety of metabolic reactions.</text>
</comment>
<comment type="cofactor">
    <cofactor evidence="2 3">
        <name>[2Fe-2S] cluster</name>
        <dbReference type="ChEBI" id="CHEBI:190135"/>
    </cofactor>
    <text evidence="2 3">Binds 1 [2Fe-2S] cluster.</text>
</comment>
<comment type="subcellular location">
    <subcellularLocation>
        <location evidence="2 3">Plastid</location>
        <location evidence="2 3">Chloroplast</location>
    </subcellularLocation>
</comment>
<comment type="similarity">
    <text evidence="3">Belongs to the 2Fe2S plant-type ferredoxin family.</text>
</comment>
<dbReference type="SMR" id="P83527"/>
<dbReference type="GO" id="GO:0009570">
    <property type="term" value="C:chloroplast stroma"/>
    <property type="evidence" value="ECO:0007669"/>
    <property type="project" value="TreeGrafter"/>
</dbReference>
<dbReference type="GO" id="GO:0005737">
    <property type="term" value="C:cytoplasm"/>
    <property type="evidence" value="ECO:0000303"/>
    <property type="project" value="UniProtKB"/>
</dbReference>
<dbReference type="GO" id="GO:0051537">
    <property type="term" value="F:2 iron, 2 sulfur cluster binding"/>
    <property type="evidence" value="ECO:0007669"/>
    <property type="project" value="UniProtKB-KW"/>
</dbReference>
<dbReference type="GO" id="GO:0009055">
    <property type="term" value="F:electron transfer activity"/>
    <property type="evidence" value="ECO:0007669"/>
    <property type="project" value="InterPro"/>
</dbReference>
<dbReference type="GO" id="GO:0046872">
    <property type="term" value="F:metal ion binding"/>
    <property type="evidence" value="ECO:0007669"/>
    <property type="project" value="UniProtKB-KW"/>
</dbReference>
<dbReference type="GO" id="GO:0022900">
    <property type="term" value="P:electron transport chain"/>
    <property type="evidence" value="ECO:0007669"/>
    <property type="project" value="InterPro"/>
</dbReference>
<dbReference type="GO" id="GO:0006124">
    <property type="term" value="P:ferredoxin metabolic process"/>
    <property type="evidence" value="ECO:0007669"/>
    <property type="project" value="UniProtKB-ARBA"/>
</dbReference>
<dbReference type="CDD" id="cd00207">
    <property type="entry name" value="fer2"/>
    <property type="match status" value="1"/>
</dbReference>
<dbReference type="FunFam" id="3.10.20.30:FF:000014">
    <property type="entry name" value="Ferredoxin"/>
    <property type="match status" value="1"/>
</dbReference>
<dbReference type="Gene3D" id="3.10.20.30">
    <property type="match status" value="1"/>
</dbReference>
<dbReference type="InterPro" id="IPR036010">
    <property type="entry name" value="2Fe-2S_ferredoxin-like_sf"/>
</dbReference>
<dbReference type="InterPro" id="IPR001041">
    <property type="entry name" value="2Fe-2S_ferredoxin-type"/>
</dbReference>
<dbReference type="InterPro" id="IPR006058">
    <property type="entry name" value="2Fe2S_fd_BS"/>
</dbReference>
<dbReference type="InterPro" id="IPR012675">
    <property type="entry name" value="Beta-grasp_dom_sf"/>
</dbReference>
<dbReference type="InterPro" id="IPR010241">
    <property type="entry name" value="Fd_pln"/>
</dbReference>
<dbReference type="NCBIfam" id="TIGR02008">
    <property type="entry name" value="fdx_plant"/>
    <property type="match status" value="1"/>
</dbReference>
<dbReference type="PANTHER" id="PTHR43112">
    <property type="entry name" value="FERREDOXIN"/>
    <property type="match status" value="1"/>
</dbReference>
<dbReference type="PANTHER" id="PTHR43112:SF3">
    <property type="entry name" value="FERREDOXIN-2, CHLOROPLASTIC"/>
    <property type="match status" value="1"/>
</dbReference>
<dbReference type="Pfam" id="PF00111">
    <property type="entry name" value="Fer2"/>
    <property type="match status" value="1"/>
</dbReference>
<dbReference type="SUPFAM" id="SSF54292">
    <property type="entry name" value="2Fe-2S ferredoxin-like"/>
    <property type="match status" value="1"/>
</dbReference>
<dbReference type="PROSITE" id="PS00197">
    <property type="entry name" value="2FE2S_FER_1"/>
    <property type="match status" value="1"/>
</dbReference>
<dbReference type="PROSITE" id="PS51085">
    <property type="entry name" value="2FE2S_FER_2"/>
    <property type="match status" value="1"/>
</dbReference>